<keyword id="KW-0378">Hydrolase</keyword>
<keyword id="KW-0663">Pyridoxal phosphate</keyword>
<gene>
    <name evidence="1" type="primary">acdS</name>
</gene>
<name>1A1D_RHIRD</name>
<sequence>MLEKFERYPLTFGATAIEYLPRLTEALGGDVEIWAKREDCNSGLAMGGNKLRKLEYIVPDAIASNADTLVSIGGVQSNHTRMVAAVAAKLGMKCRLVQESWVPHEDAVYDRVGNILMTRLMGADSRIVDDGFDIGIRQSWEDAIQSVIDEGGKPYAIPAGASVHKYGGLGYVAFAEEVARQEADLGFKFDYIIVCVVTGSTQAGMIVGFAAQDRADRVIGIDASGTPEQTRSQVRQIVDNTAELVELGRPVREDEIVILNDYAYPAYGVPSNETNEAIRLAARTEAMITDPVYEGKSMQGMIDLTRKGFFPKGSKVLYAHLGGAPALNGYSYTYRNG</sequence>
<accession>Q9AHF0</accession>
<evidence type="ECO:0000255" key="1">
    <source>
        <dbReference type="HAMAP-Rule" id="MF_00807"/>
    </source>
</evidence>
<evidence type="ECO:0000305" key="2"/>
<protein>
    <recommendedName>
        <fullName evidence="1">1-aminocyclopropane-1-carboxylate deaminase</fullName>
        <shortName evidence="1">ACC deaminase</shortName>
        <shortName evidence="1">ACCD</shortName>
        <ecNumber evidence="1">3.5.99.7</ecNumber>
    </recommendedName>
</protein>
<dbReference type="EC" id="3.5.99.7" evidence="1"/>
<dbReference type="EMBL" id="AF315580">
    <property type="protein sequence ID" value="AAK28496.1"/>
    <property type="status" value="ALT_INIT"/>
    <property type="molecule type" value="Genomic_DNA"/>
</dbReference>
<dbReference type="SMR" id="Q9AHF0"/>
<dbReference type="GO" id="GO:0008660">
    <property type="term" value="F:1-aminocyclopropane-1-carboxylate deaminase activity"/>
    <property type="evidence" value="ECO:0007669"/>
    <property type="project" value="UniProtKB-UniRule"/>
</dbReference>
<dbReference type="GO" id="GO:0019148">
    <property type="term" value="F:D-cysteine desulfhydrase activity"/>
    <property type="evidence" value="ECO:0007669"/>
    <property type="project" value="TreeGrafter"/>
</dbReference>
<dbReference type="GO" id="GO:0030170">
    <property type="term" value="F:pyridoxal phosphate binding"/>
    <property type="evidence" value="ECO:0007669"/>
    <property type="project" value="InterPro"/>
</dbReference>
<dbReference type="GO" id="GO:0018871">
    <property type="term" value="P:1-aminocyclopropane-1-carboxylate metabolic process"/>
    <property type="evidence" value="ECO:0007669"/>
    <property type="project" value="UniProtKB-UniRule"/>
</dbReference>
<dbReference type="GO" id="GO:0009310">
    <property type="term" value="P:amine catabolic process"/>
    <property type="evidence" value="ECO:0007669"/>
    <property type="project" value="InterPro"/>
</dbReference>
<dbReference type="CDD" id="cd06449">
    <property type="entry name" value="ACCD"/>
    <property type="match status" value="1"/>
</dbReference>
<dbReference type="FunFam" id="3.40.50.1100:FF:000048">
    <property type="entry name" value="1-aminocyclopropane-1-carboxylate deaminase"/>
    <property type="match status" value="1"/>
</dbReference>
<dbReference type="Gene3D" id="3.40.50.1100">
    <property type="match status" value="2"/>
</dbReference>
<dbReference type="HAMAP" id="MF_00807">
    <property type="entry name" value="ACC_deaminase"/>
    <property type="match status" value="1"/>
</dbReference>
<dbReference type="InterPro" id="IPR027278">
    <property type="entry name" value="ACCD_DCysDesulf"/>
</dbReference>
<dbReference type="InterPro" id="IPR005965">
    <property type="entry name" value="ACP_carboxylate_deaminase"/>
</dbReference>
<dbReference type="InterPro" id="IPR020601">
    <property type="entry name" value="ACP_carboxylate_deaminase_bac"/>
</dbReference>
<dbReference type="InterPro" id="IPR001926">
    <property type="entry name" value="TrpB-like_PALP"/>
</dbReference>
<dbReference type="InterPro" id="IPR036052">
    <property type="entry name" value="TrpB-like_PALP_sf"/>
</dbReference>
<dbReference type="NCBIfam" id="TIGR01274">
    <property type="entry name" value="ACC_deam"/>
    <property type="match status" value="1"/>
</dbReference>
<dbReference type="PANTHER" id="PTHR43780">
    <property type="entry name" value="1-AMINOCYCLOPROPANE-1-CARBOXYLATE DEAMINASE-RELATED"/>
    <property type="match status" value="1"/>
</dbReference>
<dbReference type="PANTHER" id="PTHR43780:SF2">
    <property type="entry name" value="1-AMINOCYCLOPROPANE-1-CARBOXYLATE DEAMINASE-RELATED"/>
    <property type="match status" value="1"/>
</dbReference>
<dbReference type="Pfam" id="PF00291">
    <property type="entry name" value="PALP"/>
    <property type="match status" value="1"/>
</dbReference>
<dbReference type="PIRSF" id="PIRSF006278">
    <property type="entry name" value="ACCD_DCysDesulf"/>
    <property type="match status" value="1"/>
</dbReference>
<dbReference type="SUPFAM" id="SSF53686">
    <property type="entry name" value="Tryptophan synthase beta subunit-like PLP-dependent enzymes"/>
    <property type="match status" value="1"/>
</dbReference>
<comment type="function">
    <text evidence="1">Catalyzes a cyclopropane ring-opening reaction, the irreversible conversion of 1-aminocyclopropane-1-carboxylate (ACC) to ammonia and alpha-ketobutyrate. Allows growth on ACC as a nitrogen source.</text>
</comment>
<comment type="catalytic activity">
    <reaction evidence="1">
        <text>1-aminocyclopropane-1-carboxylate + H2O = 2-oxobutanoate + NH4(+)</text>
        <dbReference type="Rhea" id="RHEA:16933"/>
        <dbReference type="ChEBI" id="CHEBI:15377"/>
        <dbReference type="ChEBI" id="CHEBI:16763"/>
        <dbReference type="ChEBI" id="CHEBI:28938"/>
        <dbReference type="ChEBI" id="CHEBI:58360"/>
        <dbReference type="EC" id="3.5.99.7"/>
    </reaction>
</comment>
<comment type="cofactor">
    <cofactor evidence="1">
        <name>pyridoxal 5'-phosphate</name>
        <dbReference type="ChEBI" id="CHEBI:597326"/>
    </cofactor>
</comment>
<comment type="subunit">
    <text evidence="1">Homotrimer.</text>
</comment>
<comment type="similarity">
    <text evidence="1">Belongs to the ACC deaminase/D-cysteine desulfhydrase family.</text>
</comment>
<comment type="sequence caution" evidence="2">
    <conflict type="erroneous initiation">
        <sequence resource="EMBL-CDS" id="AAK28496"/>
    </conflict>
</comment>
<feature type="chain" id="PRO_0000184496" description="1-aminocyclopropane-1-carboxylate deaminase">
    <location>
        <begin position="1"/>
        <end position="337"/>
    </location>
</feature>
<feature type="active site" description="Nucleophile" evidence="1">
    <location>
        <position position="77"/>
    </location>
</feature>
<feature type="modified residue" description="N6-(pyridoxal phosphate)lysine" evidence="1">
    <location>
        <position position="50"/>
    </location>
</feature>
<proteinExistence type="inferred from homology"/>
<reference key="1">
    <citation type="journal article" date="2001" name="Microbiology">
        <title>Genetic and biochemical characterization of an enantioselective amidase from Agrobacterium tumefaciens strain d3.</title>
        <authorList>
            <person name="Trott S."/>
            <person name="Bauer R."/>
            <person name="Knackmuss H.J."/>
            <person name="Stolz A."/>
        </authorList>
    </citation>
    <scope>NUCLEOTIDE SEQUENCE [GENOMIC DNA]</scope>
    <source>
        <strain>DSM 9674 / d3I</strain>
    </source>
</reference>
<organism>
    <name type="scientific">Rhizobium radiobacter</name>
    <name type="common">Agrobacterium tumefaciens</name>
    <name type="synonym">Agrobacterium radiobacter</name>
    <dbReference type="NCBI Taxonomy" id="358"/>
    <lineage>
        <taxon>Bacteria</taxon>
        <taxon>Pseudomonadati</taxon>
        <taxon>Pseudomonadota</taxon>
        <taxon>Alphaproteobacteria</taxon>
        <taxon>Hyphomicrobiales</taxon>
        <taxon>Rhizobiaceae</taxon>
        <taxon>Rhizobium/Agrobacterium group</taxon>
        <taxon>Agrobacterium</taxon>
        <taxon>Agrobacterium tumefaciens complex</taxon>
    </lineage>
</organism>